<comment type="function">
    <text evidence="1">Binds to the 23S rRNA.</text>
</comment>
<comment type="subunit">
    <text evidence="1">Part of the 50S ribosomal subunit.</text>
</comment>
<comment type="similarity">
    <text evidence="1">Belongs to the universal ribosomal protein uL15 family.</text>
</comment>
<gene>
    <name evidence="1" type="primary">rplO</name>
    <name type="ordered locus">EcE24377A_3784</name>
</gene>
<dbReference type="EMBL" id="CP000800">
    <property type="protein sequence ID" value="ABV18773.1"/>
    <property type="molecule type" value="Genomic_DNA"/>
</dbReference>
<dbReference type="RefSeq" id="WP_001238917.1">
    <property type="nucleotide sequence ID" value="NC_009801.1"/>
</dbReference>
<dbReference type="SMR" id="A7ZSJ0"/>
<dbReference type="GeneID" id="93778686"/>
<dbReference type="KEGG" id="ecw:EcE24377A_3784"/>
<dbReference type="HOGENOM" id="CLU_055188_4_2_6"/>
<dbReference type="Proteomes" id="UP000001122">
    <property type="component" value="Chromosome"/>
</dbReference>
<dbReference type="GO" id="GO:0022625">
    <property type="term" value="C:cytosolic large ribosomal subunit"/>
    <property type="evidence" value="ECO:0007669"/>
    <property type="project" value="TreeGrafter"/>
</dbReference>
<dbReference type="GO" id="GO:0019843">
    <property type="term" value="F:rRNA binding"/>
    <property type="evidence" value="ECO:0007669"/>
    <property type="project" value="UniProtKB-UniRule"/>
</dbReference>
<dbReference type="GO" id="GO:0003735">
    <property type="term" value="F:structural constituent of ribosome"/>
    <property type="evidence" value="ECO:0007669"/>
    <property type="project" value="InterPro"/>
</dbReference>
<dbReference type="GO" id="GO:0006412">
    <property type="term" value="P:translation"/>
    <property type="evidence" value="ECO:0007669"/>
    <property type="project" value="UniProtKB-UniRule"/>
</dbReference>
<dbReference type="FunFam" id="3.100.10.10:FF:000003">
    <property type="entry name" value="50S ribosomal protein L15"/>
    <property type="match status" value="1"/>
</dbReference>
<dbReference type="Gene3D" id="3.100.10.10">
    <property type="match status" value="1"/>
</dbReference>
<dbReference type="HAMAP" id="MF_01341">
    <property type="entry name" value="Ribosomal_uL15"/>
    <property type="match status" value="1"/>
</dbReference>
<dbReference type="InterPro" id="IPR030878">
    <property type="entry name" value="Ribosomal_uL15"/>
</dbReference>
<dbReference type="InterPro" id="IPR021131">
    <property type="entry name" value="Ribosomal_uL15/eL18"/>
</dbReference>
<dbReference type="InterPro" id="IPR036227">
    <property type="entry name" value="Ribosomal_uL15/eL18_sf"/>
</dbReference>
<dbReference type="InterPro" id="IPR005749">
    <property type="entry name" value="Ribosomal_uL15_bac-type"/>
</dbReference>
<dbReference type="InterPro" id="IPR001196">
    <property type="entry name" value="Ribosomal_uL15_CS"/>
</dbReference>
<dbReference type="NCBIfam" id="TIGR01071">
    <property type="entry name" value="rplO_bact"/>
    <property type="match status" value="1"/>
</dbReference>
<dbReference type="PANTHER" id="PTHR12934">
    <property type="entry name" value="50S RIBOSOMAL PROTEIN L15"/>
    <property type="match status" value="1"/>
</dbReference>
<dbReference type="PANTHER" id="PTHR12934:SF11">
    <property type="entry name" value="LARGE RIBOSOMAL SUBUNIT PROTEIN UL15M"/>
    <property type="match status" value="1"/>
</dbReference>
<dbReference type="Pfam" id="PF00828">
    <property type="entry name" value="Ribosomal_L27A"/>
    <property type="match status" value="1"/>
</dbReference>
<dbReference type="SUPFAM" id="SSF52080">
    <property type="entry name" value="Ribosomal proteins L15p and L18e"/>
    <property type="match status" value="1"/>
</dbReference>
<dbReference type="PROSITE" id="PS00475">
    <property type="entry name" value="RIBOSOMAL_L15"/>
    <property type="match status" value="1"/>
</dbReference>
<sequence>MRLNTLSPAEGSKKAGKRLGRGIGSGLGKTGGRGHKGQKSRSGGGVRRGFEGGQMPLYRRLPKFGFTSRKAAITAEVRLSDLAKVEGGVVDLNTLKAANIIGIQIEFAKVILAGEVTTPVTVRGLRVTKGARAAIEAAGGKIEE</sequence>
<feature type="chain" id="PRO_1000067662" description="Large ribosomal subunit protein uL15">
    <location>
        <begin position="1"/>
        <end position="144"/>
    </location>
</feature>
<feature type="region of interest" description="Disordered" evidence="2">
    <location>
        <begin position="1"/>
        <end position="54"/>
    </location>
</feature>
<feature type="compositionally biased region" description="Gly residues" evidence="2">
    <location>
        <begin position="21"/>
        <end position="31"/>
    </location>
</feature>
<proteinExistence type="inferred from homology"/>
<name>RL15_ECO24</name>
<organism>
    <name type="scientific">Escherichia coli O139:H28 (strain E24377A / ETEC)</name>
    <dbReference type="NCBI Taxonomy" id="331111"/>
    <lineage>
        <taxon>Bacteria</taxon>
        <taxon>Pseudomonadati</taxon>
        <taxon>Pseudomonadota</taxon>
        <taxon>Gammaproteobacteria</taxon>
        <taxon>Enterobacterales</taxon>
        <taxon>Enterobacteriaceae</taxon>
        <taxon>Escherichia</taxon>
    </lineage>
</organism>
<keyword id="KW-1185">Reference proteome</keyword>
<keyword id="KW-0687">Ribonucleoprotein</keyword>
<keyword id="KW-0689">Ribosomal protein</keyword>
<keyword id="KW-0694">RNA-binding</keyword>
<keyword id="KW-0699">rRNA-binding</keyword>
<evidence type="ECO:0000255" key="1">
    <source>
        <dbReference type="HAMAP-Rule" id="MF_01341"/>
    </source>
</evidence>
<evidence type="ECO:0000256" key="2">
    <source>
        <dbReference type="SAM" id="MobiDB-lite"/>
    </source>
</evidence>
<evidence type="ECO:0000305" key="3"/>
<protein>
    <recommendedName>
        <fullName evidence="1">Large ribosomal subunit protein uL15</fullName>
    </recommendedName>
    <alternativeName>
        <fullName evidence="3">50S ribosomal protein L15</fullName>
    </alternativeName>
</protein>
<accession>A7ZSJ0</accession>
<reference key="1">
    <citation type="journal article" date="2008" name="J. Bacteriol.">
        <title>The pangenome structure of Escherichia coli: comparative genomic analysis of E. coli commensal and pathogenic isolates.</title>
        <authorList>
            <person name="Rasko D.A."/>
            <person name="Rosovitz M.J."/>
            <person name="Myers G.S.A."/>
            <person name="Mongodin E.F."/>
            <person name="Fricke W.F."/>
            <person name="Gajer P."/>
            <person name="Crabtree J."/>
            <person name="Sebaihia M."/>
            <person name="Thomson N.R."/>
            <person name="Chaudhuri R."/>
            <person name="Henderson I.R."/>
            <person name="Sperandio V."/>
            <person name="Ravel J."/>
        </authorList>
    </citation>
    <scope>NUCLEOTIDE SEQUENCE [LARGE SCALE GENOMIC DNA]</scope>
    <source>
        <strain>E24377A / ETEC</strain>
    </source>
</reference>